<feature type="chain" id="PRO_0000200649" description="Protein Wnt-7a">
    <location>
        <begin position="1" status="less than"/>
        <end position="135" status="greater than"/>
    </location>
</feature>
<feature type="region of interest" description="Disordered linker" evidence="1">
    <location>
        <begin position="41"/>
        <end position="69"/>
    </location>
</feature>
<feature type="lipid moiety-binding region" description="O-palmitoleoyl serine; by PORCN" evidence="5">
    <location>
        <position position="9"/>
    </location>
</feature>
<feature type="glycosylation site" description="N-linked (GlcNAc...) asparagine" evidence="6">
    <location>
        <position position="98"/>
    </location>
</feature>
<feature type="disulfide bond" evidence="4">
    <location>
        <begin position="3"/>
        <end position="17"/>
    </location>
</feature>
<feature type="disulfide bond" evidence="4">
    <location>
        <begin position="5"/>
        <end position="12"/>
    </location>
</feature>
<feature type="disulfide bond" evidence="4">
    <location>
        <begin position="81"/>
        <end position="112"/>
    </location>
</feature>
<feature type="disulfide bond" evidence="4">
    <location>
        <begin position="97"/>
        <end position="107"/>
    </location>
</feature>
<feature type="disulfide bond" evidence="4">
    <location>
        <begin position="111"/>
        <end position="134"/>
    </location>
</feature>
<feature type="disulfide bond" evidence="4">
    <location>
        <begin position="130"/>
        <end position="131"/>
    </location>
</feature>
<feature type="sequence conflict" description="In Ref. 1; AAA49986." evidence="8" ref="1">
    <location>
        <begin position="127"/>
        <end position="131"/>
    </location>
</feature>
<feature type="non-terminal residue">
    <location>
        <position position="1"/>
    </location>
</feature>
<feature type="non-terminal residue">
    <location>
        <position position="135"/>
    </location>
</feature>
<gene>
    <name type="primary">wnt7a</name>
</gene>
<keyword id="KW-0217">Developmental protein</keyword>
<keyword id="KW-1015">Disulfide bond</keyword>
<keyword id="KW-0272">Extracellular matrix</keyword>
<keyword id="KW-0325">Glycoprotein</keyword>
<keyword id="KW-0449">Lipoprotein</keyword>
<keyword id="KW-1185">Reference proteome</keyword>
<keyword id="KW-0964">Secreted</keyword>
<keyword id="KW-0879">Wnt signaling pathway</keyword>
<dbReference type="EMBL" id="L07533">
    <property type="protein sequence ID" value="AAA49986.1"/>
    <property type="molecule type" value="mRNA"/>
</dbReference>
<dbReference type="SMR" id="P31288"/>
<dbReference type="GlyCosmos" id="P31288">
    <property type="glycosylation" value="1 site, No reported glycans"/>
</dbReference>
<dbReference type="Proteomes" id="UP000186698">
    <property type="component" value="Unplaced"/>
</dbReference>
<dbReference type="GO" id="GO:0005615">
    <property type="term" value="C:extracellular space"/>
    <property type="evidence" value="ECO:0000318"/>
    <property type="project" value="GO_Central"/>
</dbReference>
<dbReference type="GO" id="GO:0005125">
    <property type="term" value="F:cytokine activity"/>
    <property type="evidence" value="ECO:0000318"/>
    <property type="project" value="GO_Central"/>
</dbReference>
<dbReference type="GO" id="GO:0005109">
    <property type="term" value="F:frizzled binding"/>
    <property type="evidence" value="ECO:0000318"/>
    <property type="project" value="GO_Central"/>
</dbReference>
<dbReference type="GO" id="GO:0048513">
    <property type="term" value="P:animal organ development"/>
    <property type="evidence" value="ECO:0007669"/>
    <property type="project" value="UniProtKB-ARBA"/>
</dbReference>
<dbReference type="GO" id="GO:0060070">
    <property type="term" value="P:canonical Wnt signaling pathway"/>
    <property type="evidence" value="ECO:0000318"/>
    <property type="project" value="GO_Central"/>
</dbReference>
<dbReference type="GO" id="GO:0045165">
    <property type="term" value="P:cell fate commitment"/>
    <property type="evidence" value="ECO:0000318"/>
    <property type="project" value="GO_Central"/>
</dbReference>
<dbReference type="GO" id="GO:0030182">
    <property type="term" value="P:neuron differentiation"/>
    <property type="evidence" value="ECO:0000318"/>
    <property type="project" value="GO_Central"/>
</dbReference>
<dbReference type="GO" id="GO:0046330">
    <property type="term" value="P:positive regulation of JNK cascade"/>
    <property type="evidence" value="ECO:0000318"/>
    <property type="project" value="GO_Central"/>
</dbReference>
<dbReference type="GO" id="GO:0009888">
    <property type="term" value="P:tissue development"/>
    <property type="evidence" value="ECO:0007669"/>
    <property type="project" value="UniProtKB-ARBA"/>
</dbReference>
<dbReference type="InterPro" id="IPR005817">
    <property type="entry name" value="Wnt"/>
</dbReference>
<dbReference type="InterPro" id="IPR013300">
    <property type="entry name" value="Wnt7"/>
</dbReference>
<dbReference type="InterPro" id="IPR018161">
    <property type="entry name" value="Wnt_CS"/>
</dbReference>
<dbReference type="PANTHER" id="PTHR12027:SF78">
    <property type="entry name" value="PROTEIN WNT-7A"/>
    <property type="match status" value="1"/>
</dbReference>
<dbReference type="PANTHER" id="PTHR12027">
    <property type="entry name" value="WNT RELATED"/>
    <property type="match status" value="1"/>
</dbReference>
<dbReference type="Pfam" id="PF00110">
    <property type="entry name" value="wnt"/>
    <property type="match status" value="1"/>
</dbReference>
<dbReference type="PRINTS" id="PR01891">
    <property type="entry name" value="WNT7PROTEIN"/>
</dbReference>
<dbReference type="PRINTS" id="PR01349">
    <property type="entry name" value="WNTPROTEIN"/>
</dbReference>
<dbReference type="SMART" id="SM00097">
    <property type="entry name" value="WNT1"/>
    <property type="match status" value="1"/>
</dbReference>
<dbReference type="PROSITE" id="PS00246">
    <property type="entry name" value="WNT1"/>
    <property type="match status" value="1"/>
</dbReference>
<name>WNT7A_XENLA</name>
<evidence type="ECO:0000250" key="1">
    <source>
        <dbReference type="UniProtKB" id="O00755"/>
    </source>
</evidence>
<evidence type="ECO:0000250" key="2">
    <source>
        <dbReference type="UniProtKB" id="P24383"/>
    </source>
</evidence>
<evidence type="ECO:0000250" key="3">
    <source>
        <dbReference type="UniProtKB" id="P27467"/>
    </source>
</evidence>
<evidence type="ECO:0000250" key="4">
    <source>
        <dbReference type="UniProtKB" id="P28026"/>
    </source>
</evidence>
<evidence type="ECO:0000250" key="5">
    <source>
        <dbReference type="UniProtKB" id="P56704"/>
    </source>
</evidence>
<evidence type="ECO:0000255" key="6"/>
<evidence type="ECO:0000269" key="7">
    <source>
    </source>
</evidence>
<evidence type="ECO:0000305" key="8"/>
<reference key="1">
    <citation type="journal article" date="1992" name="Oncogene">
        <title>Cloning and developmental expression in Xenopus laevis of seven additional members of the Wnt family.</title>
        <authorList>
            <person name="Wolda S.L."/>
            <person name="Moon R.T."/>
        </authorList>
    </citation>
    <scope>NUCLEOTIDE SEQUENCE [MRNA]</scope>
    <scope>DEVELOPMENTAL STAGE</scope>
    <scope>TISSUE SPECIFICITY</scope>
</reference>
<organism>
    <name type="scientific">Xenopus laevis</name>
    <name type="common">African clawed frog</name>
    <dbReference type="NCBI Taxonomy" id="8355"/>
    <lineage>
        <taxon>Eukaryota</taxon>
        <taxon>Metazoa</taxon>
        <taxon>Chordata</taxon>
        <taxon>Craniata</taxon>
        <taxon>Vertebrata</taxon>
        <taxon>Euteleostomi</taxon>
        <taxon>Amphibia</taxon>
        <taxon>Batrachia</taxon>
        <taxon>Anura</taxon>
        <taxon>Pipoidea</taxon>
        <taxon>Pipidae</taxon>
        <taxon>Xenopodinae</taxon>
        <taxon>Xenopus</taxon>
        <taxon>Xenopus</taxon>
    </lineage>
</organism>
<sequence length="135" mass="15563">QECKCHGVSGSCTTKTCWTTLPKFRELGFIVKDKYKEAVQVEPVRASRNKRPTFLKIKKPLSYRKPMDTDLVYIEKSPNYCEEDPMTGSMGTQGRLCNKTAQHTSGCDLMCCGRGYNTHQYSRVWQFHWCCCNCK</sequence>
<protein>
    <recommendedName>
        <fullName>Protein Wnt-7a</fullName>
        <shortName>XWnt-7a</shortName>
    </recommendedName>
</protein>
<proteinExistence type="evidence at transcript level"/>
<accession>P31288</accession>
<comment type="function">
    <text evidence="1 2">Ligand for members of the frizzled family of seven transmembrane receptors that functions in the canonical Wnt/beta-catenin signaling pathway (By similarity). Plays an important role in embryonic development, including dorsal versus ventral patterning during limb development, skeleton development and urogenital tract development. Required for central nervous system (CNS) angiogenesis and blood-brain barrier regulation (By similarity).</text>
</comment>
<comment type="subcellular location">
    <subcellularLocation>
        <location evidence="2">Secreted</location>
        <location evidence="2">Extracellular space</location>
        <location evidence="2">Extracellular matrix</location>
    </subcellularLocation>
    <subcellularLocation>
        <location evidence="2">Secreted</location>
    </subcellularLocation>
</comment>
<comment type="tissue specificity">
    <text evidence="7">In embryo, in brain and ventral neural tube; in adults, in brain.</text>
</comment>
<comment type="developmental stage">
    <text evidence="7">Tailbud onwards.</text>
</comment>
<comment type="PTM">
    <text evidence="3 5">Palmitoleoylation is required for efficient binding to frizzled receptors. Depalmitoleoylation leads to Wnt signaling pathway inhibition.</text>
</comment>
<comment type="similarity">
    <text evidence="8">Belongs to the Wnt family.</text>
</comment>